<protein>
    <recommendedName>
        <fullName evidence="2">K(+)-insensitive pyrophosphate-energized proton pump</fullName>
        <ecNumber evidence="2">7.1.3.1</ecNumber>
    </recommendedName>
    <alternativeName>
        <fullName evidence="2">Membrane-bound proton-translocating pyrophosphatase</fullName>
    </alternativeName>
    <alternativeName>
        <fullName evidence="2">Pyrophosphate-energized inorganic pyrophosphatase</fullName>
        <shortName evidence="2">H(+)-PPase</shortName>
    </alternativeName>
</protein>
<proteinExistence type="inferred from homology"/>
<sequence>MLEHYGLWLALGCAVLAIVYGIVSARWVVAQPSGNARMQEIAAAIQEGARAYLNRQYLTISVAGAVLFVLVGLFLSWYTAIGFALGAVLSGLAGYIGMNVSVRANVRTAEAARHGIGKAMDVAFRGGAITGMLVVGLGLLGVAGYFAVLQGMGLPLEQNLHALVGLAFGSSLISIFARLGGGIFTKGADVGADLVGKVEAGIPEDDPRNPAVIADNVGDNVGDCAGMAADLFETYAVTVIATMLLGSLTLADTGSHAVLYPLVLGGVSIIASIVGAAFVKVKDGGSIMGALYKGVIVSGVLAALAYWPITQSLMRDNIHGATALYACALIGLVLTGLIVWITEYYTGTQYTPVQHVASASTTGHGTNIIAGLGISMKSTALPVIAVCAAIWGAFHFGGLYGIAIAATAMLSMAGMIVALDAYGPITDNAGGIAEMAELPPEVRNITDPLDAVGNTTKAVTKGYAIGSAALAALVLFADYTHNLQAANPDQVYAFDLSDHTVIIGLLIGGLIPYLFGAMAMEAVGRAAGAVVEEVRRQFRELPGIMAGTAKPQYDRAVDMLTRSAIGEMIVPSLLPVVVPIIVGLLLGPRALGGLLIGTIVTGLFLAISMTTGGGAWDNAKKYIEDGHFGGKGSEAHKAAITGDTVGDPYKDTAGPAINPLIKIINIVALLLVPLL</sequence>
<gene>
    <name evidence="2" type="primary">hppA</name>
    <name type="ordered locus">XAC3440</name>
</gene>
<accession>Q8PH20</accession>
<keyword id="KW-0106">Calcium</keyword>
<keyword id="KW-0997">Cell inner membrane</keyword>
<keyword id="KW-1003">Cell membrane</keyword>
<keyword id="KW-0375">Hydrogen ion transport</keyword>
<keyword id="KW-0406">Ion transport</keyword>
<keyword id="KW-0460">Magnesium</keyword>
<keyword id="KW-0472">Membrane</keyword>
<keyword id="KW-0479">Metal-binding</keyword>
<keyword id="KW-1278">Translocase</keyword>
<keyword id="KW-0812">Transmembrane</keyword>
<keyword id="KW-1133">Transmembrane helix</keyword>
<keyword id="KW-0813">Transport</keyword>
<dbReference type="EC" id="7.1.3.1" evidence="2"/>
<dbReference type="EMBL" id="AE008923">
    <property type="protein sequence ID" value="AAM38283.1"/>
    <property type="molecule type" value="Genomic_DNA"/>
</dbReference>
<dbReference type="RefSeq" id="WP_011052280.1">
    <property type="nucleotide sequence ID" value="NC_003919.1"/>
</dbReference>
<dbReference type="SMR" id="Q8PH20"/>
<dbReference type="KEGG" id="xac:XAC3440"/>
<dbReference type="eggNOG" id="COG3808">
    <property type="taxonomic scope" value="Bacteria"/>
</dbReference>
<dbReference type="HOGENOM" id="CLU_008743_3_1_6"/>
<dbReference type="Proteomes" id="UP000000576">
    <property type="component" value="Chromosome"/>
</dbReference>
<dbReference type="GO" id="GO:0005886">
    <property type="term" value="C:plasma membrane"/>
    <property type="evidence" value="ECO:0007669"/>
    <property type="project" value="UniProtKB-SubCell"/>
</dbReference>
<dbReference type="GO" id="GO:0009678">
    <property type="term" value="F:diphosphate hydrolysis-driven proton transmembrane transporter activity"/>
    <property type="evidence" value="ECO:0007669"/>
    <property type="project" value="UniProtKB-UniRule"/>
</dbReference>
<dbReference type="GO" id="GO:0004427">
    <property type="term" value="F:inorganic diphosphate phosphatase activity"/>
    <property type="evidence" value="ECO:0007669"/>
    <property type="project" value="UniProtKB-UniRule"/>
</dbReference>
<dbReference type="GO" id="GO:0000287">
    <property type="term" value="F:magnesium ion binding"/>
    <property type="evidence" value="ECO:0007669"/>
    <property type="project" value="UniProtKB-UniRule"/>
</dbReference>
<dbReference type="HAMAP" id="MF_01129">
    <property type="entry name" value="PPase_energized_pump"/>
    <property type="match status" value="1"/>
</dbReference>
<dbReference type="InterPro" id="IPR004131">
    <property type="entry name" value="PPase-energised_H-pump"/>
</dbReference>
<dbReference type="NCBIfam" id="NF001951">
    <property type="entry name" value="PRK00733.1-2"/>
    <property type="match status" value="1"/>
</dbReference>
<dbReference type="NCBIfam" id="NF001953">
    <property type="entry name" value="PRK00733.2-1"/>
    <property type="match status" value="1"/>
</dbReference>
<dbReference type="NCBIfam" id="NF001960">
    <property type="entry name" value="PRK00733.3-5"/>
    <property type="match status" value="1"/>
</dbReference>
<dbReference type="NCBIfam" id="TIGR01104">
    <property type="entry name" value="V_PPase"/>
    <property type="match status" value="1"/>
</dbReference>
<dbReference type="PANTHER" id="PTHR31998">
    <property type="entry name" value="K(+)-INSENSITIVE PYROPHOSPHATE-ENERGIZED PROTON PUMP"/>
    <property type="match status" value="1"/>
</dbReference>
<dbReference type="Pfam" id="PF03030">
    <property type="entry name" value="H_PPase"/>
    <property type="match status" value="1"/>
</dbReference>
<dbReference type="PIRSF" id="PIRSF001265">
    <property type="entry name" value="H+-PPase"/>
    <property type="match status" value="1"/>
</dbReference>
<name>HPPA_XANAC</name>
<reference key="1">
    <citation type="journal article" date="2002" name="Nature">
        <title>Comparison of the genomes of two Xanthomonas pathogens with differing host specificities.</title>
        <authorList>
            <person name="da Silva A.C.R."/>
            <person name="Ferro J.A."/>
            <person name="Reinach F.C."/>
            <person name="Farah C.S."/>
            <person name="Furlan L.R."/>
            <person name="Quaggio R.B."/>
            <person name="Monteiro-Vitorello C.B."/>
            <person name="Van Sluys M.A."/>
            <person name="Almeida N.F. Jr."/>
            <person name="Alves L.M.C."/>
            <person name="do Amaral A.M."/>
            <person name="Bertolini M.C."/>
            <person name="Camargo L.E.A."/>
            <person name="Camarotte G."/>
            <person name="Cannavan F."/>
            <person name="Cardozo J."/>
            <person name="Chambergo F."/>
            <person name="Ciapina L.P."/>
            <person name="Cicarelli R.M.B."/>
            <person name="Coutinho L.L."/>
            <person name="Cursino-Santos J.R."/>
            <person name="El-Dorry H."/>
            <person name="Faria J.B."/>
            <person name="Ferreira A.J.S."/>
            <person name="Ferreira R.C.C."/>
            <person name="Ferro M.I.T."/>
            <person name="Formighieri E.F."/>
            <person name="Franco M.C."/>
            <person name="Greggio C.C."/>
            <person name="Gruber A."/>
            <person name="Katsuyama A.M."/>
            <person name="Kishi L.T."/>
            <person name="Leite R.P."/>
            <person name="Lemos E.G.M."/>
            <person name="Lemos M.V.F."/>
            <person name="Locali E.C."/>
            <person name="Machado M.A."/>
            <person name="Madeira A.M.B.N."/>
            <person name="Martinez-Rossi N.M."/>
            <person name="Martins E.C."/>
            <person name="Meidanis J."/>
            <person name="Menck C.F.M."/>
            <person name="Miyaki C.Y."/>
            <person name="Moon D.H."/>
            <person name="Moreira L.M."/>
            <person name="Novo M.T.M."/>
            <person name="Okura V.K."/>
            <person name="Oliveira M.C."/>
            <person name="Oliveira V.R."/>
            <person name="Pereira H.A."/>
            <person name="Rossi A."/>
            <person name="Sena J.A.D."/>
            <person name="Silva C."/>
            <person name="de Souza R.F."/>
            <person name="Spinola L.A.F."/>
            <person name="Takita M.A."/>
            <person name="Tamura R.E."/>
            <person name="Teixeira E.C."/>
            <person name="Tezza R.I.D."/>
            <person name="Trindade dos Santos M."/>
            <person name="Truffi D."/>
            <person name="Tsai S.M."/>
            <person name="White F.F."/>
            <person name="Setubal J.C."/>
            <person name="Kitajima J.P."/>
        </authorList>
    </citation>
    <scope>NUCLEOTIDE SEQUENCE [LARGE SCALE GENOMIC DNA]</scope>
    <source>
        <strain>306</strain>
    </source>
</reference>
<comment type="function">
    <text evidence="2">Proton pump that utilizes the energy of pyrophosphate hydrolysis as the driving force for proton movement across the membrane. Generates a proton motive force.</text>
</comment>
<comment type="catalytic activity">
    <reaction evidence="2">
        <text>diphosphate + H2O + H(+)(in) = 2 phosphate + 2 H(+)(out)</text>
        <dbReference type="Rhea" id="RHEA:13973"/>
        <dbReference type="ChEBI" id="CHEBI:15377"/>
        <dbReference type="ChEBI" id="CHEBI:15378"/>
        <dbReference type="ChEBI" id="CHEBI:33019"/>
        <dbReference type="ChEBI" id="CHEBI:43474"/>
        <dbReference type="EC" id="7.1.3.1"/>
    </reaction>
</comment>
<comment type="cofactor">
    <cofactor evidence="2">
        <name>Mg(2+)</name>
        <dbReference type="ChEBI" id="CHEBI:18420"/>
    </cofactor>
</comment>
<comment type="subunit">
    <text evidence="2">Homodimer.</text>
</comment>
<comment type="subcellular location">
    <subcellularLocation>
        <location evidence="2">Cell inner membrane</location>
        <topology evidence="2">Multi-pass membrane protein</topology>
    </subcellularLocation>
</comment>
<comment type="similarity">
    <text evidence="2">Belongs to the H(+)-translocating pyrophosphatase (TC 3.A.10) family. K(+)-insensitive subfamily.</text>
</comment>
<organism>
    <name type="scientific">Xanthomonas axonopodis pv. citri (strain 306)</name>
    <dbReference type="NCBI Taxonomy" id="190486"/>
    <lineage>
        <taxon>Bacteria</taxon>
        <taxon>Pseudomonadati</taxon>
        <taxon>Pseudomonadota</taxon>
        <taxon>Gammaproteobacteria</taxon>
        <taxon>Lysobacterales</taxon>
        <taxon>Lysobacteraceae</taxon>
        <taxon>Xanthomonas</taxon>
    </lineage>
</organism>
<feature type="chain" id="PRO_0000217034" description="K(+)-insensitive pyrophosphate-energized proton pump">
    <location>
        <begin position="1"/>
        <end position="675"/>
    </location>
</feature>
<feature type="transmembrane region" description="Helical" evidence="2">
    <location>
        <begin position="5"/>
        <end position="25"/>
    </location>
</feature>
<feature type="transmembrane region" description="Helical" evidence="2">
    <location>
        <begin position="65"/>
        <end position="85"/>
    </location>
</feature>
<feature type="transmembrane region" description="Helical" evidence="2">
    <location>
        <begin position="129"/>
        <end position="149"/>
    </location>
</feature>
<feature type="transmembrane region" description="Helical" evidence="2">
    <location>
        <begin position="164"/>
        <end position="184"/>
    </location>
</feature>
<feature type="transmembrane region" description="Helical" evidence="2">
    <location>
        <begin position="231"/>
        <end position="251"/>
    </location>
</feature>
<feature type="transmembrane region" description="Helical" evidence="2">
    <location>
        <begin position="258"/>
        <end position="278"/>
    </location>
</feature>
<feature type="transmembrane region" description="Helical" evidence="2">
    <location>
        <begin position="287"/>
        <end position="307"/>
    </location>
</feature>
<feature type="transmembrane region" description="Helical" evidence="2">
    <location>
        <begin position="321"/>
        <end position="341"/>
    </location>
</feature>
<feature type="transmembrane region" description="Helical" evidence="2">
    <location>
        <begin position="384"/>
        <end position="404"/>
    </location>
</feature>
<feature type="transmembrane region" description="Helical" evidence="2">
    <location>
        <begin position="405"/>
        <end position="425"/>
    </location>
</feature>
<feature type="transmembrane region" description="Helical" evidence="2">
    <location>
        <begin position="458"/>
        <end position="478"/>
    </location>
</feature>
<feature type="transmembrane region" description="Helical" evidence="2">
    <location>
        <begin position="500"/>
        <end position="520"/>
    </location>
</feature>
<feature type="transmembrane region" description="Helical" evidence="2">
    <location>
        <begin position="568"/>
        <end position="588"/>
    </location>
</feature>
<feature type="transmembrane region" description="Helical" evidence="2">
    <location>
        <begin position="590"/>
        <end position="610"/>
    </location>
</feature>
<feature type="transmembrane region" description="Helical" evidence="2">
    <location>
        <begin position="655"/>
        <end position="675"/>
    </location>
</feature>
<feature type="binding site" evidence="1">
    <location>
        <position position="186"/>
    </location>
    <ligand>
        <name>substrate</name>
    </ligand>
</feature>
<feature type="binding site" evidence="1">
    <location>
        <position position="189"/>
    </location>
    <ligand>
        <name>Mg(2+)</name>
        <dbReference type="ChEBI" id="CHEBI:18420"/>
        <label>1</label>
    </ligand>
</feature>
<feature type="binding site" evidence="1">
    <location>
        <position position="193"/>
    </location>
    <ligand>
        <name>Mg(2+)</name>
        <dbReference type="ChEBI" id="CHEBI:18420"/>
        <label>1</label>
    </ligand>
</feature>
<feature type="binding site" evidence="1">
    <location>
        <position position="216"/>
    </location>
    <ligand>
        <name>Mg(2+)</name>
        <dbReference type="ChEBI" id="CHEBI:18420"/>
        <label>2</label>
    </ligand>
</feature>
<feature type="binding site" evidence="1">
    <location>
        <position position="219"/>
    </location>
    <ligand>
        <name>Mg(2+)</name>
        <dbReference type="ChEBI" id="CHEBI:18420"/>
        <label>2</label>
    </ligand>
</feature>
<feature type="binding site" evidence="1">
    <location>
        <position position="427"/>
    </location>
    <ligand>
        <name>Mg(2+)</name>
        <dbReference type="ChEBI" id="CHEBI:18420"/>
        <label>2</label>
    </ligand>
</feature>
<feature type="binding site" evidence="1">
    <location>
        <position position="617"/>
    </location>
    <ligand>
        <name>Ca(2+)</name>
        <dbReference type="ChEBI" id="CHEBI:29108"/>
    </ligand>
</feature>
<feature type="binding site" evidence="1">
    <location>
        <position position="643"/>
    </location>
    <ligand>
        <name>Ca(2+)</name>
        <dbReference type="ChEBI" id="CHEBI:29108"/>
    </ligand>
</feature>
<feature type="binding site" evidence="1">
    <location>
        <position position="647"/>
    </location>
    <ligand>
        <name>Ca(2+)</name>
        <dbReference type="ChEBI" id="CHEBI:29108"/>
    </ligand>
</feature>
<feature type="binding site" evidence="1">
    <location>
        <position position="650"/>
    </location>
    <ligand>
        <name>substrate</name>
    </ligand>
</feature>
<feature type="site" description="Important for ion transport" evidence="1">
    <location>
        <position position="178"/>
    </location>
</feature>
<feature type="site" description="Important for ion transport" evidence="1">
    <location>
        <position position="223"/>
    </location>
</feature>
<feature type="site" description="Important for ion transport" evidence="1">
    <location>
        <position position="230"/>
    </location>
</feature>
<feature type="site" description="Determinant of potassium independence" evidence="2">
    <location>
        <position position="457"/>
    </location>
</feature>
<feature type="site" description="Important for ion transport" evidence="1">
    <location>
        <position position="651"/>
    </location>
</feature>
<feature type="site" description="Important for ion transport" evidence="1">
    <location>
        <position position="662"/>
    </location>
</feature>
<evidence type="ECO:0000250" key="1"/>
<evidence type="ECO:0000255" key="2">
    <source>
        <dbReference type="HAMAP-Rule" id="MF_01129"/>
    </source>
</evidence>